<organism>
    <name type="scientific">Saccharolobus solfataricus (strain ATCC 35092 / DSM 1617 / JCM 11322 / P2)</name>
    <name type="common">Sulfolobus solfataricus</name>
    <dbReference type="NCBI Taxonomy" id="273057"/>
    <lineage>
        <taxon>Archaea</taxon>
        <taxon>Thermoproteota</taxon>
        <taxon>Thermoprotei</taxon>
        <taxon>Sulfolobales</taxon>
        <taxon>Sulfolobaceae</taxon>
        <taxon>Saccharolobus</taxon>
    </lineage>
</organism>
<evidence type="ECO:0000250" key="1"/>
<evidence type="ECO:0000255" key="2">
    <source>
        <dbReference type="HAMAP-Rule" id="MF_00100"/>
    </source>
</evidence>
<accession>Q980Q8</accession>
<protein>
    <recommendedName>
        <fullName evidence="2">Probable translation initiation factor IF-2</fullName>
    </recommendedName>
</protein>
<comment type="function">
    <text evidence="2">Function in general translation initiation by promoting the binding of the formylmethionine-tRNA to ribosomes. Seems to function along with eIF-2.</text>
</comment>
<comment type="similarity">
    <text evidence="2">Belongs to the TRAFAC class translation factor GTPase superfamily. Classic translation factor GTPase family. IF-2 subfamily.</text>
</comment>
<reference key="1">
    <citation type="journal article" date="2001" name="Proc. Natl. Acad. Sci. U.S.A.">
        <title>The complete genome of the crenarchaeon Sulfolobus solfataricus P2.</title>
        <authorList>
            <person name="She Q."/>
            <person name="Singh R.K."/>
            <person name="Confalonieri F."/>
            <person name="Zivanovic Y."/>
            <person name="Allard G."/>
            <person name="Awayez M.J."/>
            <person name="Chan-Weiher C.C.-Y."/>
            <person name="Clausen I.G."/>
            <person name="Curtis B.A."/>
            <person name="De Moors A."/>
            <person name="Erauso G."/>
            <person name="Fletcher C."/>
            <person name="Gordon P.M.K."/>
            <person name="Heikamp-de Jong I."/>
            <person name="Jeffries A.C."/>
            <person name="Kozera C.J."/>
            <person name="Medina N."/>
            <person name="Peng X."/>
            <person name="Thi-Ngoc H.P."/>
            <person name="Redder P."/>
            <person name="Schenk M.E."/>
            <person name="Theriault C."/>
            <person name="Tolstrup N."/>
            <person name="Charlebois R.L."/>
            <person name="Doolittle W.F."/>
            <person name="Duguet M."/>
            <person name="Gaasterland T."/>
            <person name="Garrett R.A."/>
            <person name="Ragan M.A."/>
            <person name="Sensen C.W."/>
            <person name="Van der Oost J."/>
        </authorList>
    </citation>
    <scope>NUCLEOTIDE SEQUENCE [LARGE SCALE GENOMIC DNA]</scope>
    <source>
        <strain>ATCC 35092 / DSM 1617 / JCM 11322 / P2</strain>
    </source>
</reference>
<keyword id="KW-0342">GTP-binding</keyword>
<keyword id="KW-0396">Initiation factor</keyword>
<keyword id="KW-0547">Nucleotide-binding</keyword>
<keyword id="KW-0648">Protein biosynthesis</keyword>
<keyword id="KW-1185">Reference proteome</keyword>
<proteinExistence type="inferred from homology"/>
<dbReference type="EMBL" id="AE006641">
    <property type="protein sequence ID" value="AAK40570.1"/>
    <property type="molecule type" value="Genomic_DNA"/>
</dbReference>
<dbReference type="PIR" id="C90164">
    <property type="entry name" value="C90164"/>
</dbReference>
<dbReference type="RefSeq" id="WP_009990481.1">
    <property type="nucleotide sequence ID" value="NC_002754.1"/>
</dbReference>
<dbReference type="SMR" id="Q980Q8"/>
<dbReference type="FunCoup" id="Q980Q8">
    <property type="interactions" value="138"/>
</dbReference>
<dbReference type="STRING" id="273057.SSO0228"/>
<dbReference type="PaxDb" id="273057-SSO0228"/>
<dbReference type="EnsemblBacteria" id="AAK40570">
    <property type="protein sequence ID" value="AAK40570"/>
    <property type="gene ID" value="SSO0228"/>
</dbReference>
<dbReference type="GeneID" id="44129198"/>
<dbReference type="KEGG" id="sso:SSO0228"/>
<dbReference type="PATRIC" id="fig|273057.12.peg.225"/>
<dbReference type="eggNOG" id="arCOG01560">
    <property type="taxonomic scope" value="Archaea"/>
</dbReference>
<dbReference type="HOGENOM" id="CLU_002656_3_3_2"/>
<dbReference type="InParanoid" id="Q980Q8"/>
<dbReference type="PhylomeDB" id="Q980Q8"/>
<dbReference type="Proteomes" id="UP000001974">
    <property type="component" value="Chromosome"/>
</dbReference>
<dbReference type="GO" id="GO:0005737">
    <property type="term" value="C:cytoplasm"/>
    <property type="evidence" value="ECO:0000318"/>
    <property type="project" value="GO_Central"/>
</dbReference>
<dbReference type="GO" id="GO:0005525">
    <property type="term" value="F:GTP binding"/>
    <property type="evidence" value="ECO:0007669"/>
    <property type="project" value="UniProtKB-KW"/>
</dbReference>
<dbReference type="GO" id="GO:0003924">
    <property type="term" value="F:GTPase activity"/>
    <property type="evidence" value="ECO:0007669"/>
    <property type="project" value="UniProtKB-UniRule"/>
</dbReference>
<dbReference type="GO" id="GO:0003743">
    <property type="term" value="F:translation initiation factor activity"/>
    <property type="evidence" value="ECO:0000318"/>
    <property type="project" value="GO_Central"/>
</dbReference>
<dbReference type="GO" id="GO:0006413">
    <property type="term" value="P:translational initiation"/>
    <property type="evidence" value="ECO:0000318"/>
    <property type="project" value="GO_Central"/>
</dbReference>
<dbReference type="CDD" id="cd03703">
    <property type="entry name" value="aeIF5B_II"/>
    <property type="match status" value="1"/>
</dbReference>
<dbReference type="CDD" id="cd16266">
    <property type="entry name" value="IF2_aeIF5B_IV"/>
    <property type="match status" value="1"/>
</dbReference>
<dbReference type="CDD" id="cd01887">
    <property type="entry name" value="IF2_eIF5B"/>
    <property type="match status" value="1"/>
</dbReference>
<dbReference type="FunFam" id="3.40.50.300:FF:000112">
    <property type="entry name" value="Eukaryotic translation initiation factor 5B"/>
    <property type="match status" value="1"/>
</dbReference>
<dbReference type="FunFam" id="2.40.30.10:FF:000013">
    <property type="entry name" value="eukaryotic translation initiation factor 5B"/>
    <property type="match status" value="1"/>
</dbReference>
<dbReference type="FunFam" id="2.40.30.10:FF:000152">
    <property type="entry name" value="Probable translation initiation factor IF-2"/>
    <property type="match status" value="1"/>
</dbReference>
<dbReference type="Gene3D" id="3.40.50.300">
    <property type="entry name" value="P-loop containing nucleotide triphosphate hydrolases"/>
    <property type="match status" value="1"/>
</dbReference>
<dbReference type="Gene3D" id="2.40.30.10">
    <property type="entry name" value="Translation factors"/>
    <property type="match status" value="2"/>
</dbReference>
<dbReference type="Gene3D" id="3.40.50.10050">
    <property type="entry name" value="Translation initiation factor IF- 2, domain 3"/>
    <property type="match status" value="1"/>
</dbReference>
<dbReference type="HAMAP" id="MF_00100_A">
    <property type="entry name" value="IF_2_A"/>
    <property type="match status" value="1"/>
</dbReference>
<dbReference type="InterPro" id="IPR004161">
    <property type="entry name" value="EFTu-like_2"/>
</dbReference>
<dbReference type="InterPro" id="IPR029459">
    <property type="entry name" value="EFTU-type"/>
</dbReference>
<dbReference type="InterPro" id="IPR027417">
    <property type="entry name" value="P-loop_NTPase"/>
</dbReference>
<dbReference type="InterPro" id="IPR005225">
    <property type="entry name" value="Small_GTP-bd"/>
</dbReference>
<dbReference type="InterPro" id="IPR000795">
    <property type="entry name" value="T_Tr_GTP-bd_dom"/>
</dbReference>
<dbReference type="InterPro" id="IPR004544">
    <property type="entry name" value="TF_aIF-2_arc"/>
</dbReference>
<dbReference type="InterPro" id="IPR015760">
    <property type="entry name" value="TIF_IF2"/>
</dbReference>
<dbReference type="InterPro" id="IPR023115">
    <property type="entry name" value="TIF_IF2_dom3"/>
</dbReference>
<dbReference type="InterPro" id="IPR036925">
    <property type="entry name" value="TIF_IF2_dom3_sf"/>
</dbReference>
<dbReference type="InterPro" id="IPR009000">
    <property type="entry name" value="Transl_B-barrel_sf"/>
</dbReference>
<dbReference type="NCBIfam" id="TIGR00491">
    <property type="entry name" value="aIF-2"/>
    <property type="match status" value="1"/>
</dbReference>
<dbReference type="NCBIfam" id="NF003078">
    <property type="entry name" value="PRK04004.1"/>
    <property type="match status" value="1"/>
</dbReference>
<dbReference type="NCBIfam" id="TIGR00231">
    <property type="entry name" value="small_GTP"/>
    <property type="match status" value="1"/>
</dbReference>
<dbReference type="PANTHER" id="PTHR43381:SF4">
    <property type="entry name" value="EUKARYOTIC TRANSLATION INITIATION FACTOR 5B"/>
    <property type="match status" value="1"/>
</dbReference>
<dbReference type="PANTHER" id="PTHR43381">
    <property type="entry name" value="TRANSLATION INITIATION FACTOR IF-2-RELATED"/>
    <property type="match status" value="1"/>
</dbReference>
<dbReference type="Pfam" id="PF00009">
    <property type="entry name" value="GTP_EFTU"/>
    <property type="match status" value="1"/>
</dbReference>
<dbReference type="Pfam" id="PF03144">
    <property type="entry name" value="GTP_EFTU_D2"/>
    <property type="match status" value="1"/>
</dbReference>
<dbReference type="Pfam" id="PF14578">
    <property type="entry name" value="GTP_EFTU_D4"/>
    <property type="match status" value="1"/>
</dbReference>
<dbReference type="Pfam" id="PF11987">
    <property type="entry name" value="IF-2"/>
    <property type="match status" value="1"/>
</dbReference>
<dbReference type="PRINTS" id="PR00315">
    <property type="entry name" value="ELONGATNFCT"/>
</dbReference>
<dbReference type="SUPFAM" id="SSF52156">
    <property type="entry name" value="Initiation factor IF2/eIF5b, domain 3"/>
    <property type="match status" value="1"/>
</dbReference>
<dbReference type="SUPFAM" id="SSF52540">
    <property type="entry name" value="P-loop containing nucleoside triphosphate hydrolases"/>
    <property type="match status" value="1"/>
</dbReference>
<dbReference type="SUPFAM" id="SSF50447">
    <property type="entry name" value="Translation proteins"/>
    <property type="match status" value="1"/>
</dbReference>
<dbReference type="PROSITE" id="PS51722">
    <property type="entry name" value="G_TR_2"/>
    <property type="match status" value="1"/>
</dbReference>
<feature type="chain" id="PRO_0000137308" description="Probable translation initiation factor IF-2">
    <location>
        <begin position="1"/>
        <end position="600"/>
    </location>
</feature>
<feature type="domain" description="tr-type G">
    <location>
        <begin position="10"/>
        <end position="227"/>
    </location>
</feature>
<feature type="region of interest" description="G1" evidence="1">
    <location>
        <begin position="19"/>
        <end position="26"/>
    </location>
</feature>
<feature type="region of interest" description="G2" evidence="1">
    <location>
        <begin position="44"/>
        <end position="48"/>
    </location>
</feature>
<feature type="region of interest" description="G3" evidence="1">
    <location>
        <begin position="83"/>
        <end position="86"/>
    </location>
</feature>
<feature type="region of interest" description="G4" evidence="1">
    <location>
        <begin position="137"/>
        <end position="140"/>
    </location>
</feature>
<feature type="region of interest" description="G5" evidence="1">
    <location>
        <begin position="205"/>
        <end position="207"/>
    </location>
</feature>
<feature type="binding site" evidence="2">
    <location>
        <begin position="19"/>
        <end position="26"/>
    </location>
    <ligand>
        <name>GTP</name>
        <dbReference type="ChEBI" id="CHEBI:37565"/>
    </ligand>
</feature>
<feature type="binding site" evidence="2">
    <location>
        <begin position="83"/>
        <end position="87"/>
    </location>
    <ligand>
        <name>GTP</name>
        <dbReference type="ChEBI" id="CHEBI:37565"/>
    </ligand>
</feature>
<feature type="binding site" evidence="2">
    <location>
        <begin position="137"/>
        <end position="140"/>
    </location>
    <ligand>
        <name>GTP</name>
        <dbReference type="ChEBI" id="CHEBI:37565"/>
    </ligand>
</feature>
<sequence length="600" mass="66934">MKISNSERRLRQPIVVVLGHVDHGKTTLLDKIRGTTVVKKEPGEMTQEVGASFVPSYIIEKLAEPLKKVIPIKLQIPGLLFIDTPGHEYFSNLRRRGGSVADIAILVVDITEGLQKQSIESIQILRERKVPFLIAANKIDKIPGWKSNNDIPFLASIEKQRNDVKVYLDNLVYNLVSQLANLGFSSERYDRIKDFTKTVAIVPVSAKTGEGVADLLALLAGLTQRYLETRLKFAEGPAKGVILEVKEDPGLGHTIDVIIYDGVLKKNDTIILGGINGIIITKVRGIFVPRPLQDMKLSKYDLTPIDEVYAAAGVKISAPNLEEALAGSPIYVVEDESKVERYKQQIEEEIKEVRLYSDIDGIILKADSLGTLEALVSALQREGIPIRLADIGPISKRDVIEASIVAQRSKEYGIIAAFRVKLLQGIDTSGIKILYNEIIYQLIEDIKKHINDVREAEKRRTFDTLILPGKIKILPGYVFRRSDPVVVGIEVIGGIIRPKYPLIKEDGRRVGEVLQIQDNKKSLERATKGMEVAISIKGNIMIGRHVNEGDVLYTDVPKEDLEILVNKYPSSITDDMREVIKEIIRIKRKEDPLYGLGLQI</sequence>
<gene>
    <name evidence="2" type="primary">infB</name>
    <name type="ordered locus">SSO0228</name>
</gene>
<name>IF2P_SACS2</name>